<keyword id="KW-0002">3D-structure</keyword>
<keyword id="KW-1221">Calcium-activated potassium channel impairing toxin</keyword>
<keyword id="KW-0903">Direct protein sequencing</keyword>
<keyword id="KW-1015">Disulfide bond</keyword>
<keyword id="KW-0872">Ion channel impairing toxin</keyword>
<keyword id="KW-0528">Neurotoxin</keyword>
<keyword id="KW-0632">Potassium channel impairing toxin</keyword>
<keyword id="KW-0964">Secreted</keyword>
<keyword id="KW-0732">Signal</keyword>
<keyword id="KW-0800">Toxin</keyword>
<keyword id="KW-1220">Voltage-gated potassium channel impairing toxin</keyword>
<keyword id="KW-0738">Voltage-gated sodium channel impairing toxin</keyword>
<dbReference type="EMBL" id="MT450712">
    <property type="protein sequence ID" value="QPD99048.1"/>
    <property type="molecule type" value="mRNA"/>
</dbReference>
<dbReference type="PIR" id="S70473">
    <property type="entry name" value="S70473"/>
</dbReference>
<dbReference type="PDB" id="1TSK">
    <property type="method" value="NMR"/>
    <property type="chains" value="A=23-57"/>
</dbReference>
<dbReference type="PDB" id="6ATL">
    <property type="method" value="X-ray"/>
    <property type="resolution" value="1.80 A"/>
    <property type="chains" value="A/C=23-57"/>
</dbReference>
<dbReference type="PDBsum" id="1TSK"/>
<dbReference type="PDBsum" id="6ATL"/>
<dbReference type="SMR" id="P56219"/>
<dbReference type="EvolutionaryTrace" id="P56219"/>
<dbReference type="GO" id="GO:0005576">
    <property type="term" value="C:extracellular region"/>
    <property type="evidence" value="ECO:0007669"/>
    <property type="project" value="UniProtKB-SubCell"/>
</dbReference>
<dbReference type="GO" id="GO:0008200">
    <property type="term" value="F:ion channel inhibitor activity"/>
    <property type="evidence" value="ECO:0007669"/>
    <property type="project" value="InterPro"/>
</dbReference>
<dbReference type="GO" id="GO:0015459">
    <property type="term" value="F:potassium channel regulator activity"/>
    <property type="evidence" value="ECO:0007669"/>
    <property type="project" value="UniProtKB-KW"/>
</dbReference>
<dbReference type="GO" id="GO:0017080">
    <property type="term" value="F:sodium channel regulator activity"/>
    <property type="evidence" value="ECO:0007669"/>
    <property type="project" value="UniProtKB-KW"/>
</dbReference>
<dbReference type="GO" id="GO:0090729">
    <property type="term" value="F:toxin activity"/>
    <property type="evidence" value="ECO:0007669"/>
    <property type="project" value="UniProtKB-KW"/>
</dbReference>
<dbReference type="Gene3D" id="3.30.30.10">
    <property type="entry name" value="Knottin, scorpion toxin-like"/>
    <property type="match status" value="1"/>
</dbReference>
<dbReference type="InterPro" id="IPR036574">
    <property type="entry name" value="Scorpion_toxin-like_sf"/>
</dbReference>
<dbReference type="InterPro" id="IPR001947">
    <property type="entry name" value="Scorpion_toxinS_K_inh"/>
</dbReference>
<dbReference type="Pfam" id="PF00451">
    <property type="entry name" value="Toxin_2"/>
    <property type="match status" value="1"/>
</dbReference>
<dbReference type="SUPFAM" id="SSF57095">
    <property type="entry name" value="Scorpion toxin-like"/>
    <property type="match status" value="1"/>
</dbReference>
<dbReference type="PROSITE" id="PS01138">
    <property type="entry name" value="SCORP_SHORT_TOXIN"/>
    <property type="match status" value="1"/>
</dbReference>
<feature type="signal peptide" evidence="1">
    <location>
        <begin position="1"/>
        <end position="20"/>
    </location>
</feature>
<feature type="propeptide" id="PRO_0000035329" description="Removed by a carboxypeptidase" evidence="5">
    <location>
        <begin position="21"/>
        <end position="22"/>
    </location>
</feature>
<feature type="chain" id="PRO_0000035330" description="Potassium channel toxin alpha-KTx 4.2" evidence="5">
    <location>
        <begin position="23"/>
        <end position="57"/>
    </location>
</feature>
<feature type="disulfide bond" evidence="4 6 14 15">
    <location>
        <begin position="29"/>
        <end position="50"/>
    </location>
</feature>
<feature type="disulfide bond" evidence="4 6 14 15">
    <location>
        <begin position="35"/>
        <end position="55"/>
    </location>
</feature>
<feature type="disulfide bond" evidence="4 6 14 15">
    <location>
        <begin position="39"/>
        <end position="57"/>
    </location>
</feature>
<feature type="strand" evidence="17">
    <location>
        <begin position="24"/>
        <end position="28"/>
    </location>
</feature>
<feature type="helix" evidence="17">
    <location>
        <begin position="32"/>
        <end position="35"/>
    </location>
</feature>
<feature type="helix" evidence="17">
    <location>
        <begin position="36"/>
        <end position="39"/>
    </location>
</feature>
<feature type="strand" evidence="16">
    <location>
        <begin position="44"/>
        <end position="46"/>
    </location>
</feature>
<feature type="strand" evidence="17">
    <location>
        <begin position="49"/>
        <end position="51"/>
    </location>
</feature>
<feature type="strand" evidence="17">
    <location>
        <begin position="54"/>
        <end position="56"/>
    </location>
</feature>
<protein>
    <recommendedName>
        <fullName>Potassium channel toxin alpha-KTx 4.2</fullName>
    </recommendedName>
    <alternativeName>
        <fullName evidence="10">Neurotoxin Ts-kappa</fullName>
        <shortName evidence="10">TsK</shortName>
        <shortName evidence="7 8 10">TsKappa</shortName>
    </alternativeName>
    <alternativeName>
        <fullName evidence="11">Tityustoxin-9</fullName>
        <shortName evidence="9">Ts9</shortName>
    </alternativeName>
</protein>
<evidence type="ECO:0000255" key="1"/>
<evidence type="ECO:0000269" key="2">
    <source>
    </source>
</evidence>
<evidence type="ECO:0000269" key="3">
    <source>
    </source>
</evidence>
<evidence type="ECO:0000269" key="4">
    <source>
    </source>
</evidence>
<evidence type="ECO:0000269" key="5">
    <source>
    </source>
</evidence>
<evidence type="ECO:0000269" key="6">
    <source>
    </source>
</evidence>
<evidence type="ECO:0000303" key="7">
    <source>
    </source>
</evidence>
<evidence type="ECO:0000303" key="8">
    <source>
    </source>
</evidence>
<evidence type="ECO:0000303" key="9">
    <source>
    </source>
</evidence>
<evidence type="ECO:0000303" key="10">
    <source>
    </source>
</evidence>
<evidence type="ECO:0000305" key="11"/>
<evidence type="ECO:0000305" key="12">
    <source>
    </source>
</evidence>
<evidence type="ECO:0000312" key="13">
    <source>
        <dbReference type="EMBL" id="QPD99048.1"/>
    </source>
</evidence>
<evidence type="ECO:0000312" key="14">
    <source>
        <dbReference type="PDB" id="1TSK"/>
    </source>
</evidence>
<evidence type="ECO:0000312" key="15">
    <source>
        <dbReference type="PDB" id="6ATL"/>
    </source>
</evidence>
<evidence type="ECO:0007829" key="16">
    <source>
        <dbReference type="PDB" id="1TSK"/>
    </source>
</evidence>
<evidence type="ECO:0007829" key="17">
    <source>
        <dbReference type="PDB" id="6ATL"/>
    </source>
</evidence>
<reference key="1">
    <citation type="journal article" date="1996" name="FEBS Lett.">
        <title>Characterization of a new peptide from Tityus serrulatus scorpion venom which is a ligand of the apamin-binding site.</title>
        <authorList>
            <person name="Legros C."/>
            <person name="Oughideni R."/>
            <person name="Darbon H."/>
            <person name="Rochat H."/>
            <person name="Bougis P.E."/>
            <person name="Martin-Eauclaire M.-F."/>
        </authorList>
    </citation>
    <scope>NUCLEOTIDE SEQUENCE [MRNA]</scope>
    <scope>PROTEIN SEQUENCE OF 23-57</scope>
    <scope>SUBCELLULAR LOCATION</scope>
    <source>
        <tissue>Venom</tissue>
        <tissue>Venom gland</tissue>
    </source>
</reference>
<reference evidence="13" key="2">
    <citation type="journal article" date="2021" name="Toxicon">
        <title>Novel components of Tityus serrulatus venom: a transcriptomic approach.</title>
        <authorList>
            <person name="Kalapothakis Y."/>
            <person name="Miranda K."/>
            <person name="Pereira A.H."/>
            <person name="Witt A.S.A."/>
            <person name="Marani C."/>
            <person name="Martins A.P."/>
            <person name="Leal H.G."/>
            <person name="Campos-Junior E."/>
            <person name="Pimenta A.M.C."/>
            <person name="Borges A."/>
            <person name="Chavez-Olortegui C."/>
            <person name="Kalapothakis E."/>
        </authorList>
    </citation>
    <scope>NUCLEOTIDE SEQUENCE [MRNA]</scope>
    <source>
        <tissue>Telson</tissue>
    </source>
</reference>
<reference key="3">
    <citation type="journal article" date="2001" name="J. Biol. Chem.">
        <title>Design and characterization of a highly selective peptide inhibitor of the small conductance calcium-activated K+ channel, SkCa2.</title>
        <authorList>
            <person name="Shakkottai V.G."/>
            <person name="Regaya I."/>
            <person name="Wulff H."/>
            <person name="Fajloun Z."/>
            <person name="Tomita H."/>
            <person name="Fathallah M."/>
            <person name="Cahalan M.D."/>
            <person name="Gargus J.J."/>
            <person name="Sabatier J.M."/>
            <person name="Chandy K.G."/>
        </authorList>
    </citation>
    <scope>FUNCTION</scope>
</reference>
<reference key="4">
    <citation type="journal article" date="2008" name="Biochem. Pharmacol.">
        <title>A common 'hot spot' confers hERG blockade activity to alpha-scorpion toxins affecting K+ channels.</title>
        <authorList>
            <person name="Abdel-Mottaleb Y."/>
            <person name="Corzo G."/>
            <person name="Martin-Eauclaire M.F."/>
            <person name="Satake H."/>
            <person name="Ceard B."/>
            <person name="Peigneur S."/>
            <person name="Nambaru P."/>
            <person name="Bougis P.E."/>
            <person name="Possani L.D."/>
            <person name="Tytgat J."/>
        </authorList>
    </citation>
    <scope>FUNCTION</scope>
</reference>
<reference key="5">
    <citation type="journal article" date="2009" name="Protein Pept. Lett.">
        <title>Tityus serrulatus scorpion venom and toxins: an overview.</title>
        <authorList>
            <person name="Cologna C.T."/>
            <person name="Marcussi S."/>
            <person name="Giglio J.R."/>
            <person name="Soares A.M."/>
            <person name="Arantes E.C."/>
        </authorList>
    </citation>
    <scope>NOMENCLATURE</scope>
</reference>
<reference key="6">
    <citation type="journal article" date="1997" name="Proteins">
        <title>Solution structure of TsKappa, a charybdotoxin-like scorpion toxin from Tityus serrulatus with high affinity for apamin-sensitive Ca(2+)-activated K+ channels.</title>
        <authorList>
            <person name="Blanc E."/>
            <person name="Lecomte C."/>
            <person name="Martin-Eauclaire M.-F."/>
            <person name="van Rietschoten J."/>
            <person name="Sabatier J.-M."/>
            <person name="Darbon H."/>
        </authorList>
    </citation>
    <scope>STRUCTURE BY NMR OF 23-57</scope>
    <scope>DISULFIDE BONDS</scope>
    <scope>FUNCTION</scope>
</reference>
<reference key="7">
    <citation type="journal article" date="2018" name="Nat. Struct. Mol. Biol.">
        <title>Screening, large-scale production and structure-based classification of cystine-dense peptides.</title>
        <authorList>
            <person name="Correnti C.E."/>
            <person name="Gewe M.M."/>
            <person name="Mehlin C."/>
            <person name="Bandaranayake A.D."/>
            <person name="Johnsen W.A."/>
            <person name="Rupert P.B."/>
            <person name="Brusniak M.Y."/>
            <person name="Clarke M."/>
            <person name="Burke S.E."/>
            <person name="De Van Der Schueren W."/>
            <person name="Pilat K."/>
            <person name="Turnbaugh S.M."/>
            <person name="May D."/>
            <person name="Watson A."/>
            <person name="Chan M.K."/>
            <person name="Bahl C.D."/>
            <person name="Olson J.M."/>
            <person name="Strong R.K."/>
        </authorList>
    </citation>
    <scope>X-RAY CRYSTALLOGRAPHY (1.80 ANGSTROMS) OF 23-57</scope>
    <scope>SYNTHESIS OF 23-57</scope>
    <scope>DISULFIDE BONDS</scope>
</reference>
<sequence>MKVLYGILIIFILCSMFYLSQEVVIGQRCYRSPDCYSACKKLVGKATGKCTNGRCDC</sequence>
<proteinExistence type="evidence at protein level"/>
<name>KAX42_TITSE</name>
<accession>P56219</accession>
<accession>A0A7S8MU87</accession>
<comment type="function">
    <text evidence="2 3 4">Blocker for small-conductance calcium-activated potassium channels KCa2.2/KCNN2 (Kd=80 nM) and KCa2.3/KCNN3 (Kd=197 nM) (PubMed:11527975) and ERG1/Kv11.1/KCNH2 potassium channels (53% inhibition at 5 uM) (PubMed:18687312). Has also been shown to inhibit Kv1.1/KCNA1 and Nav1.7/SCN9A with a moderate potency, as well as Kv11.1/KCNH2/ERG1 and Kv1.2/KCNA2 with a low potency (PubMed:29483648).</text>
</comment>
<comment type="subcellular location">
    <subcellularLocation>
        <location evidence="5">Secreted</location>
    </subcellularLocation>
</comment>
<comment type="tissue specificity">
    <text evidence="12">Expressed by the venom gland.</text>
</comment>
<comment type="domain">
    <text evidence="6">Has the structural arrangement of an alpha-helix connected to a beta-sheet by disulfide bonds (CSalpha/beta).</text>
</comment>
<comment type="similarity">
    <text evidence="11">Belongs to the short scorpion toxin superfamily. Potassium channel inhibitor family. Alpha-KTx 04 subfamily.</text>
</comment>
<organism>
    <name type="scientific">Tityus serrulatus</name>
    <name type="common">Brazilian scorpion</name>
    <dbReference type="NCBI Taxonomy" id="6887"/>
    <lineage>
        <taxon>Eukaryota</taxon>
        <taxon>Metazoa</taxon>
        <taxon>Ecdysozoa</taxon>
        <taxon>Arthropoda</taxon>
        <taxon>Chelicerata</taxon>
        <taxon>Arachnida</taxon>
        <taxon>Scorpiones</taxon>
        <taxon>Buthida</taxon>
        <taxon>Buthoidea</taxon>
        <taxon>Buthidae</taxon>
        <taxon>Tityus</taxon>
    </lineage>
</organism>